<feature type="chain" id="PRO_0000357286" description="2,3-diketo-5-methylthiopentyl-1-phosphate enolase">
    <location>
        <begin position="1"/>
        <end position="406"/>
    </location>
</feature>
<feature type="active site" description="Proton acceptor" evidence="1">
    <location>
        <position position="94"/>
    </location>
</feature>
<feature type="binding site" evidence="1">
    <location>
        <position position="143"/>
    </location>
    <ligand>
        <name>substrate</name>
    </ligand>
</feature>
<feature type="binding site" evidence="1">
    <location>
        <begin position="169"/>
        <end position="172"/>
    </location>
    <ligand>
        <name>substrate</name>
    </ligand>
</feature>
<feature type="binding site" description="via carbamate group" evidence="1">
    <location>
        <position position="169"/>
    </location>
    <ligand>
        <name>Mg(2+)</name>
        <dbReference type="ChEBI" id="CHEBI:18420"/>
    </ligand>
</feature>
<feature type="binding site" evidence="1">
    <location>
        <position position="171"/>
    </location>
    <ligand>
        <name>Mg(2+)</name>
        <dbReference type="ChEBI" id="CHEBI:18420"/>
    </ligand>
</feature>
<feature type="binding site" evidence="1">
    <location>
        <position position="172"/>
    </location>
    <ligand>
        <name>Mg(2+)</name>
        <dbReference type="ChEBI" id="CHEBI:18420"/>
    </ligand>
</feature>
<feature type="binding site" evidence="1">
    <location>
        <position position="260"/>
    </location>
    <ligand>
        <name>substrate</name>
    </ligand>
</feature>
<feature type="binding site" evidence="1">
    <location>
        <position position="332"/>
    </location>
    <ligand>
        <name>substrate</name>
    </ligand>
</feature>
<feature type="binding site" evidence="1">
    <location>
        <begin position="354"/>
        <end position="355"/>
    </location>
    <ligand>
        <name>substrate</name>
    </ligand>
</feature>
<feature type="modified residue" description="N6-carboxylysine" evidence="1">
    <location>
        <position position="169"/>
    </location>
</feature>
<name>MTNW_BACP2</name>
<gene>
    <name evidence="1" type="primary">mtnW</name>
    <name type="ordered locus">BPUM_1252</name>
</gene>
<reference key="1">
    <citation type="journal article" date="2007" name="PLoS ONE">
        <title>Paradoxical DNA repair and peroxide resistance gene conservation in Bacillus pumilus SAFR-032.</title>
        <authorList>
            <person name="Gioia J."/>
            <person name="Yerrapragada S."/>
            <person name="Qin X."/>
            <person name="Jiang H."/>
            <person name="Igboeli O.C."/>
            <person name="Muzny D."/>
            <person name="Dugan-Rocha S."/>
            <person name="Ding Y."/>
            <person name="Hawes A."/>
            <person name="Liu W."/>
            <person name="Perez L."/>
            <person name="Kovar C."/>
            <person name="Dinh H."/>
            <person name="Lee S."/>
            <person name="Nazareth L."/>
            <person name="Blyth P."/>
            <person name="Holder M."/>
            <person name="Buhay C."/>
            <person name="Tirumalai M.R."/>
            <person name="Liu Y."/>
            <person name="Dasgupta I."/>
            <person name="Bokhetache L."/>
            <person name="Fujita M."/>
            <person name="Karouia F."/>
            <person name="Eswara Moorthy P."/>
            <person name="Siefert J."/>
            <person name="Uzman A."/>
            <person name="Buzumbo P."/>
            <person name="Verma A."/>
            <person name="Zwiya H."/>
            <person name="McWilliams B.D."/>
            <person name="Olowu A."/>
            <person name="Clinkenbeard K.D."/>
            <person name="Newcombe D."/>
            <person name="Golebiewski L."/>
            <person name="Petrosino J.F."/>
            <person name="Nicholson W.L."/>
            <person name="Fox G.E."/>
            <person name="Venkateswaran K."/>
            <person name="Highlander S.K."/>
            <person name="Weinstock G.M."/>
        </authorList>
    </citation>
    <scope>NUCLEOTIDE SEQUENCE [LARGE SCALE GENOMIC DNA]</scope>
    <source>
        <strain>SAFR-032</strain>
    </source>
</reference>
<reference key="2">
    <citation type="journal article" date="2016" name="PLoS ONE">
        <title>Bacillus pumilus SAFR-032 Genome Revisited: Sequence Update and Re-Annotation.</title>
        <authorList>
            <person name="Stepanov V.G."/>
            <person name="Tirumalai M.R."/>
            <person name="Montazari S."/>
            <person name="Checinska A."/>
            <person name="Venkateswaran K."/>
            <person name="Fox G.E."/>
        </authorList>
    </citation>
    <scope>SEQUENCE REVISION TO N-TERMINUS</scope>
    <source>
        <strain>SAFR-032</strain>
    </source>
</reference>
<evidence type="ECO:0000255" key="1">
    <source>
        <dbReference type="HAMAP-Rule" id="MF_01679"/>
    </source>
</evidence>
<proteinExistence type="inferred from homology"/>
<keyword id="KW-0028">Amino-acid biosynthesis</keyword>
<keyword id="KW-0413">Isomerase</keyword>
<keyword id="KW-0460">Magnesium</keyword>
<keyword id="KW-0479">Metal-binding</keyword>
<keyword id="KW-0486">Methionine biosynthesis</keyword>
<dbReference type="EC" id="5.3.2.5" evidence="1"/>
<dbReference type="EMBL" id="CP000813">
    <property type="protein sequence ID" value="ABV61935.2"/>
    <property type="molecule type" value="Genomic_DNA"/>
</dbReference>
<dbReference type="RefSeq" id="WP_041815463.1">
    <property type="nucleotide sequence ID" value="NZ_VEIC01000008.1"/>
</dbReference>
<dbReference type="SMR" id="A8FCG8"/>
<dbReference type="STRING" id="315750.BPUM_1252"/>
<dbReference type="GeneID" id="5620515"/>
<dbReference type="KEGG" id="bpu:BPUM_1252"/>
<dbReference type="eggNOG" id="COG1850">
    <property type="taxonomic scope" value="Bacteria"/>
</dbReference>
<dbReference type="HOGENOM" id="CLU_031450_3_1_9"/>
<dbReference type="OrthoDB" id="9770811at2"/>
<dbReference type="UniPathway" id="UPA00904">
    <property type="reaction ID" value="UER00876"/>
</dbReference>
<dbReference type="Proteomes" id="UP000001355">
    <property type="component" value="Chromosome"/>
</dbReference>
<dbReference type="GO" id="GO:0043715">
    <property type="term" value="F:2,3-diketo-5-methylthiopentyl-1-phosphate enolase activity"/>
    <property type="evidence" value="ECO:0007669"/>
    <property type="project" value="UniProtKB-UniRule"/>
</dbReference>
<dbReference type="GO" id="GO:0000287">
    <property type="term" value="F:magnesium ion binding"/>
    <property type="evidence" value="ECO:0007669"/>
    <property type="project" value="UniProtKB-UniRule"/>
</dbReference>
<dbReference type="GO" id="GO:0016984">
    <property type="term" value="F:ribulose-bisphosphate carboxylase activity"/>
    <property type="evidence" value="ECO:0007669"/>
    <property type="project" value="InterPro"/>
</dbReference>
<dbReference type="GO" id="GO:0015977">
    <property type="term" value="P:carbon fixation"/>
    <property type="evidence" value="ECO:0007669"/>
    <property type="project" value="InterPro"/>
</dbReference>
<dbReference type="GO" id="GO:0019509">
    <property type="term" value="P:L-methionine salvage from methylthioadenosine"/>
    <property type="evidence" value="ECO:0007669"/>
    <property type="project" value="UniProtKB-UniRule"/>
</dbReference>
<dbReference type="CDD" id="cd08209">
    <property type="entry name" value="RLP_DK-MTP-1-P-enolase"/>
    <property type="match status" value="1"/>
</dbReference>
<dbReference type="Gene3D" id="3.20.20.110">
    <property type="entry name" value="Ribulose bisphosphate carboxylase, large subunit, C-terminal domain"/>
    <property type="match status" value="1"/>
</dbReference>
<dbReference type="Gene3D" id="3.30.70.150">
    <property type="entry name" value="RuBisCO large subunit, N-terminal domain"/>
    <property type="match status" value="1"/>
</dbReference>
<dbReference type="HAMAP" id="MF_01679">
    <property type="entry name" value="Salvage_MtnW"/>
    <property type="match status" value="1"/>
</dbReference>
<dbReference type="InterPro" id="IPR017717">
    <property type="entry name" value="Diketo-Methiopentyl-P_enolase"/>
</dbReference>
<dbReference type="InterPro" id="IPR033966">
    <property type="entry name" value="RuBisCO"/>
</dbReference>
<dbReference type="InterPro" id="IPR020878">
    <property type="entry name" value="RuBisCo_large_chain_AS"/>
</dbReference>
<dbReference type="InterPro" id="IPR000685">
    <property type="entry name" value="RuBisCO_lsu_C"/>
</dbReference>
<dbReference type="InterPro" id="IPR036376">
    <property type="entry name" value="RuBisCO_lsu_C_sf"/>
</dbReference>
<dbReference type="InterPro" id="IPR017443">
    <property type="entry name" value="RuBisCO_lsu_fd_N"/>
</dbReference>
<dbReference type="InterPro" id="IPR036422">
    <property type="entry name" value="RuBisCO_lsu_N_sf"/>
</dbReference>
<dbReference type="NCBIfam" id="NF007095">
    <property type="entry name" value="PRK09549.1"/>
    <property type="match status" value="1"/>
</dbReference>
<dbReference type="NCBIfam" id="TIGR03332">
    <property type="entry name" value="salvage_mtnW"/>
    <property type="match status" value="1"/>
</dbReference>
<dbReference type="PANTHER" id="PTHR42704">
    <property type="entry name" value="RIBULOSE BISPHOSPHATE CARBOXYLASE"/>
    <property type="match status" value="1"/>
</dbReference>
<dbReference type="PANTHER" id="PTHR42704:SF17">
    <property type="entry name" value="RIBULOSE BISPHOSPHATE CARBOXYLASE LARGE CHAIN"/>
    <property type="match status" value="1"/>
</dbReference>
<dbReference type="Pfam" id="PF00016">
    <property type="entry name" value="RuBisCO_large"/>
    <property type="match status" value="2"/>
</dbReference>
<dbReference type="Pfam" id="PF02788">
    <property type="entry name" value="RuBisCO_large_N"/>
    <property type="match status" value="1"/>
</dbReference>
<dbReference type="SFLD" id="SFLDF00157">
    <property type="entry name" value="2_3-diketo-5-methylthiopentyl"/>
    <property type="match status" value="1"/>
</dbReference>
<dbReference type="SFLD" id="SFLDG00301">
    <property type="entry name" value="RuBisCO-like_proteins"/>
    <property type="match status" value="1"/>
</dbReference>
<dbReference type="SUPFAM" id="SSF51649">
    <property type="entry name" value="RuBisCo, C-terminal domain"/>
    <property type="match status" value="1"/>
</dbReference>
<dbReference type="SUPFAM" id="SSF54966">
    <property type="entry name" value="RuBisCO, large subunit, small (N-terminal) domain"/>
    <property type="match status" value="1"/>
</dbReference>
<dbReference type="PROSITE" id="PS00157">
    <property type="entry name" value="RUBISCO_LARGE"/>
    <property type="match status" value="1"/>
</dbReference>
<protein>
    <recommendedName>
        <fullName evidence="1">2,3-diketo-5-methylthiopentyl-1-phosphate enolase</fullName>
        <shortName evidence="1">DK-MTP-1-P enolase</shortName>
        <ecNumber evidence="1">5.3.2.5</ecNumber>
    </recommendedName>
    <alternativeName>
        <fullName evidence="1">RuBisCO-like protein</fullName>
        <shortName evidence="1">RLP</shortName>
    </alternativeName>
</protein>
<comment type="function">
    <text evidence="1">Catalyzes the enolization of 2,3-diketo-5-methylthiopentyl-1-phosphate (DK-MTP-1-P) into 2-hydroxy-3-keto-5-methylthiopentenyl-1-phosphate (HK-MTPenyl-1-P).</text>
</comment>
<comment type="catalytic activity">
    <reaction evidence="1">
        <text>5-methylsulfanyl-2,3-dioxopentyl phosphate = 2-hydroxy-5-methylsulfanyl-3-oxopent-1-enyl phosphate</text>
        <dbReference type="Rhea" id="RHEA:18769"/>
        <dbReference type="ChEBI" id="CHEBI:58828"/>
        <dbReference type="ChEBI" id="CHEBI:59505"/>
        <dbReference type="EC" id="5.3.2.5"/>
    </reaction>
</comment>
<comment type="cofactor">
    <cofactor evidence="1">
        <name>Mg(2+)</name>
        <dbReference type="ChEBI" id="CHEBI:18420"/>
    </cofactor>
    <text evidence="1">Binds 1 Mg(2+) ion per subunit.</text>
</comment>
<comment type="pathway">
    <text evidence="1">Amino-acid biosynthesis; L-methionine biosynthesis via salvage pathway; L-methionine from S-methyl-5-thio-alpha-D-ribose 1-phosphate: step 3/6.</text>
</comment>
<comment type="subunit">
    <text evidence="1">Homodimer.</text>
</comment>
<comment type="miscellaneous">
    <text evidence="1">Has no RuBP-carboxylation activity.</text>
</comment>
<comment type="similarity">
    <text evidence="1">Belongs to the RuBisCO large chain family. Type IV subfamily.</text>
</comment>
<organism>
    <name type="scientific">Bacillus pumilus (strain SAFR-032)</name>
    <dbReference type="NCBI Taxonomy" id="315750"/>
    <lineage>
        <taxon>Bacteria</taxon>
        <taxon>Bacillati</taxon>
        <taxon>Bacillota</taxon>
        <taxon>Bacilli</taxon>
        <taxon>Bacillales</taxon>
        <taxon>Bacillaceae</taxon>
        <taxon>Bacillus</taxon>
    </lineage>
</organism>
<sequence>MSELLATYVLTHREDEQVNRKAEQIALGLTVGSWTDLPQLKKEQLQKHKGRVEKVTEKFAPAENGLYQSEVTIAYPEANFSADIPAVLSTIFGKLSLDGKVKLVDIQFSDRFKKSLPGPVFGIDGIRKKTGVFDRPLLMSIFKGVIGRDMTDLKEQLRLQALGGVDFIKDDEILFESPLAPFEDRIKEGKKILKETYEETGHRTLYAVHLTGRTFELRDRARKAAELGADALLFNVFAYGLDVMQSLAEDPDIRLPIMAHPAVSGALTSSPEYGFSHSLLLGKLNRYAGADLSLFPSPYGSVALPKKDAFGIYEACVKEDSVQKTFPVPSAGIHPGMVPVLMKDFGLDHVINAGGGIHGHPRGAIGGGKAFRSIIDAVIHGESIQEKTASCQDLKAALELWGRVVE</sequence>
<accession>A8FCG8</accession>